<dbReference type="EC" id="2.7.8.7" evidence="1"/>
<dbReference type="EMBL" id="AE005176">
    <property type="protein sequence ID" value="AAK04941.1"/>
    <property type="molecule type" value="Genomic_DNA"/>
</dbReference>
<dbReference type="PIR" id="C86730">
    <property type="entry name" value="C86730"/>
</dbReference>
<dbReference type="RefSeq" id="NP_266999.1">
    <property type="nucleotide sequence ID" value="NC_002662.1"/>
</dbReference>
<dbReference type="RefSeq" id="WP_003132600.1">
    <property type="nucleotide sequence ID" value="NC_002662.1"/>
</dbReference>
<dbReference type="SMR" id="Q9CH95"/>
<dbReference type="PaxDb" id="272623-L61355"/>
<dbReference type="EnsemblBacteria" id="AAK04941">
    <property type="protein sequence ID" value="AAK04941"/>
    <property type="gene ID" value="L61355"/>
</dbReference>
<dbReference type="KEGG" id="lla:L61355"/>
<dbReference type="PATRIC" id="fig|272623.7.peg.902"/>
<dbReference type="eggNOG" id="COG0736">
    <property type="taxonomic scope" value="Bacteria"/>
</dbReference>
<dbReference type="HOGENOM" id="CLU_089696_1_2_9"/>
<dbReference type="OrthoDB" id="517356at2"/>
<dbReference type="Proteomes" id="UP000002196">
    <property type="component" value="Chromosome"/>
</dbReference>
<dbReference type="GO" id="GO:0005737">
    <property type="term" value="C:cytoplasm"/>
    <property type="evidence" value="ECO:0007669"/>
    <property type="project" value="UniProtKB-SubCell"/>
</dbReference>
<dbReference type="GO" id="GO:0008897">
    <property type="term" value="F:holo-[acyl-carrier-protein] synthase activity"/>
    <property type="evidence" value="ECO:0007669"/>
    <property type="project" value="UniProtKB-UniRule"/>
</dbReference>
<dbReference type="GO" id="GO:0000287">
    <property type="term" value="F:magnesium ion binding"/>
    <property type="evidence" value="ECO:0007669"/>
    <property type="project" value="UniProtKB-UniRule"/>
</dbReference>
<dbReference type="GO" id="GO:0006633">
    <property type="term" value="P:fatty acid biosynthetic process"/>
    <property type="evidence" value="ECO:0007669"/>
    <property type="project" value="UniProtKB-UniRule"/>
</dbReference>
<dbReference type="Gene3D" id="3.90.470.20">
    <property type="entry name" value="4'-phosphopantetheinyl transferase domain"/>
    <property type="match status" value="1"/>
</dbReference>
<dbReference type="HAMAP" id="MF_00101">
    <property type="entry name" value="AcpS"/>
    <property type="match status" value="1"/>
</dbReference>
<dbReference type="InterPro" id="IPR008278">
    <property type="entry name" value="4-PPantetheinyl_Trfase_dom"/>
</dbReference>
<dbReference type="InterPro" id="IPR037143">
    <property type="entry name" value="4-PPantetheinyl_Trfase_dom_sf"/>
</dbReference>
<dbReference type="InterPro" id="IPR002582">
    <property type="entry name" value="ACPS"/>
</dbReference>
<dbReference type="InterPro" id="IPR004568">
    <property type="entry name" value="Ppantetheine-prot_Trfase_dom"/>
</dbReference>
<dbReference type="NCBIfam" id="TIGR00516">
    <property type="entry name" value="acpS"/>
    <property type="match status" value="1"/>
</dbReference>
<dbReference type="NCBIfam" id="TIGR00556">
    <property type="entry name" value="pantethn_trn"/>
    <property type="match status" value="1"/>
</dbReference>
<dbReference type="Pfam" id="PF01648">
    <property type="entry name" value="ACPS"/>
    <property type="match status" value="1"/>
</dbReference>
<dbReference type="SUPFAM" id="SSF56214">
    <property type="entry name" value="4'-phosphopantetheinyl transferase"/>
    <property type="match status" value="1"/>
</dbReference>
<comment type="function">
    <text evidence="1">Transfers the 4'-phosphopantetheine moiety from coenzyme A to a Ser of acyl-carrier-protein.</text>
</comment>
<comment type="catalytic activity">
    <reaction evidence="1">
        <text>apo-[ACP] + CoA = holo-[ACP] + adenosine 3',5'-bisphosphate + H(+)</text>
        <dbReference type="Rhea" id="RHEA:12068"/>
        <dbReference type="Rhea" id="RHEA-COMP:9685"/>
        <dbReference type="Rhea" id="RHEA-COMP:9690"/>
        <dbReference type="ChEBI" id="CHEBI:15378"/>
        <dbReference type="ChEBI" id="CHEBI:29999"/>
        <dbReference type="ChEBI" id="CHEBI:57287"/>
        <dbReference type="ChEBI" id="CHEBI:58343"/>
        <dbReference type="ChEBI" id="CHEBI:64479"/>
        <dbReference type="EC" id="2.7.8.7"/>
    </reaction>
</comment>
<comment type="cofactor">
    <cofactor evidence="1">
        <name>Mg(2+)</name>
        <dbReference type="ChEBI" id="CHEBI:18420"/>
    </cofactor>
</comment>
<comment type="subcellular location">
    <subcellularLocation>
        <location evidence="1">Cytoplasm</location>
    </subcellularLocation>
</comment>
<comment type="similarity">
    <text evidence="1">Belongs to the P-Pant transferase superfamily. AcpS family.</text>
</comment>
<sequence length="119" mass="13309">MVFGTGVDNVELSRIQKALTRSERFVEQVLTAVELEKYNSFQSTARKTEFLAGRWAAKEAFSKAYGTGFGKALGMHDLEIKNDELGKPFFTKHPFDGQVHLSISHSNLEAVAFVVLEKN</sequence>
<gene>
    <name evidence="1" type="primary">acpS</name>
    <name type="ordered locus">LL0843</name>
    <name type="ORF">L61355</name>
</gene>
<keyword id="KW-0963">Cytoplasm</keyword>
<keyword id="KW-0275">Fatty acid biosynthesis</keyword>
<keyword id="KW-0276">Fatty acid metabolism</keyword>
<keyword id="KW-0444">Lipid biosynthesis</keyword>
<keyword id="KW-0443">Lipid metabolism</keyword>
<keyword id="KW-0460">Magnesium</keyword>
<keyword id="KW-0479">Metal-binding</keyword>
<keyword id="KW-1185">Reference proteome</keyword>
<keyword id="KW-0808">Transferase</keyword>
<organism>
    <name type="scientific">Lactococcus lactis subsp. lactis (strain IL1403)</name>
    <name type="common">Streptococcus lactis</name>
    <dbReference type="NCBI Taxonomy" id="272623"/>
    <lineage>
        <taxon>Bacteria</taxon>
        <taxon>Bacillati</taxon>
        <taxon>Bacillota</taxon>
        <taxon>Bacilli</taxon>
        <taxon>Lactobacillales</taxon>
        <taxon>Streptococcaceae</taxon>
        <taxon>Lactococcus</taxon>
    </lineage>
</organism>
<evidence type="ECO:0000255" key="1">
    <source>
        <dbReference type="HAMAP-Rule" id="MF_00101"/>
    </source>
</evidence>
<accession>Q9CH95</accession>
<name>ACPS_LACLA</name>
<feature type="chain" id="PRO_0000175657" description="Holo-[acyl-carrier-protein] synthase">
    <location>
        <begin position="1"/>
        <end position="119"/>
    </location>
</feature>
<feature type="binding site" evidence="1">
    <location>
        <position position="8"/>
    </location>
    <ligand>
        <name>Mg(2+)</name>
        <dbReference type="ChEBI" id="CHEBI:18420"/>
    </ligand>
</feature>
<feature type="binding site" evidence="1">
    <location>
        <position position="59"/>
    </location>
    <ligand>
        <name>Mg(2+)</name>
        <dbReference type="ChEBI" id="CHEBI:18420"/>
    </ligand>
</feature>
<reference key="1">
    <citation type="journal article" date="2001" name="Genome Res.">
        <title>The complete genome sequence of the lactic acid bacterium Lactococcus lactis ssp. lactis IL1403.</title>
        <authorList>
            <person name="Bolotin A."/>
            <person name="Wincker P."/>
            <person name="Mauger S."/>
            <person name="Jaillon O."/>
            <person name="Malarme K."/>
            <person name="Weissenbach J."/>
            <person name="Ehrlich S.D."/>
            <person name="Sorokin A."/>
        </authorList>
    </citation>
    <scope>NUCLEOTIDE SEQUENCE [LARGE SCALE GENOMIC DNA]</scope>
    <source>
        <strain>IL1403</strain>
    </source>
</reference>
<proteinExistence type="inferred from homology"/>
<protein>
    <recommendedName>
        <fullName evidence="1">Holo-[acyl-carrier-protein] synthase</fullName>
        <shortName evidence="1">Holo-ACP synthase</shortName>
        <ecNumber evidence="1">2.7.8.7</ecNumber>
    </recommendedName>
    <alternativeName>
        <fullName evidence="1">4'-phosphopantetheinyl transferase AcpS</fullName>
    </alternativeName>
</protein>